<reference key="1">
    <citation type="journal article" date="1993" name="Aust. J. Chem.">
        <title>Peptides from Australian frogs. The structure of the dynastins from Limnodynastes salmini and fletcherin from Limnodynastes fletcheri.</title>
        <authorList>
            <person name="Bradford A.M."/>
            <person name="Raftery M.J."/>
            <person name="Bowie J.H."/>
            <person name="Wallace J.C."/>
            <person name="Tyler M.J."/>
        </authorList>
    </citation>
    <scope>PROTEIN SEQUENCE</scope>
    <scope>MASS SPECTROMETRY</scope>
    <source>
        <tissue>Skin secretion</tissue>
    </source>
</reference>
<evidence type="ECO:0000269" key="1">
    <source ref="1"/>
</evidence>
<keyword id="KW-0903">Direct protein sequencing</keyword>
<keyword id="KW-0964">Secreted</keyword>
<proteinExistence type="evidence at protein level"/>
<name>DYS4_LIMSA</name>
<protein>
    <recommendedName>
        <fullName>Dynastin-4</fullName>
    </recommendedName>
</protein>
<comment type="subcellular location">
    <subcellularLocation>
        <location>Secreted</location>
    </subcellularLocation>
</comment>
<comment type="tissue specificity">
    <text>Expressed by the skin glands.</text>
</comment>
<comment type="mass spectrometry"/>
<accession>P82082</accession>
<dbReference type="GO" id="GO:0005576">
    <property type="term" value="C:extracellular region"/>
    <property type="evidence" value="ECO:0007669"/>
    <property type="project" value="UniProtKB-SubCell"/>
</dbReference>
<sequence>GLVSNLGI</sequence>
<feature type="peptide" id="PRO_0000043787" description="Dynastin-4">
    <location>
        <begin position="1"/>
        <end position="8"/>
    </location>
</feature>
<organism>
    <name type="scientific">Limnodynastes salmini</name>
    <name type="common">Salmon-striped frog</name>
    <dbReference type="NCBI Taxonomy" id="39404"/>
    <lineage>
        <taxon>Eukaryota</taxon>
        <taxon>Metazoa</taxon>
        <taxon>Chordata</taxon>
        <taxon>Craniata</taxon>
        <taxon>Vertebrata</taxon>
        <taxon>Euteleostomi</taxon>
        <taxon>Amphibia</taxon>
        <taxon>Batrachia</taxon>
        <taxon>Anura</taxon>
        <taxon>Neobatrachia</taxon>
        <taxon>Myobatrachoidea</taxon>
        <taxon>Limnodynastidae</taxon>
        <taxon>Limnodynastes</taxon>
    </lineage>
</organism>